<evidence type="ECO:0000255" key="1">
    <source>
        <dbReference type="HAMAP-Rule" id="MF_00008"/>
    </source>
</evidence>
<evidence type="ECO:0000305" key="2"/>
<sequence length="264" mass="29721">MHQYLDLLRRIQAEGVTKTDRTGTGTTSVFGHQMRFDLSRGFPLVTTKKLHTRSIFVELLWFLRGDTNIGWLKDNKVSIWDEWADANGDLGPVYGKQWRSWACPDGSTVDQITQVVEMIRKSPDSRRLIVSAWNPADIESMALPPCHCLFQFYVADGKLSCQLYQRSADVFLGVPFNIASYALLTHMVAQVTGLEVGAFVHTFGDAHLYSNHMEQAALQLSRAPLPLPRLELNPEVKDLFAFTMDDIKVVDYQCHAHIAAPVAV</sequence>
<organism>
    <name type="scientific">Paramagnetospirillum magneticum (strain ATCC 700264 / AMB-1)</name>
    <name type="common">Magnetospirillum magneticum</name>
    <dbReference type="NCBI Taxonomy" id="342108"/>
    <lineage>
        <taxon>Bacteria</taxon>
        <taxon>Pseudomonadati</taxon>
        <taxon>Pseudomonadota</taxon>
        <taxon>Alphaproteobacteria</taxon>
        <taxon>Rhodospirillales</taxon>
        <taxon>Magnetospirillaceae</taxon>
        <taxon>Paramagnetospirillum</taxon>
    </lineage>
</organism>
<gene>
    <name evidence="1" type="primary">thyA</name>
    <name type="ordered locus">amb1327</name>
</gene>
<name>TYSY_PARM1</name>
<keyword id="KW-0963">Cytoplasm</keyword>
<keyword id="KW-0489">Methyltransferase</keyword>
<keyword id="KW-0545">Nucleotide biosynthesis</keyword>
<keyword id="KW-0808">Transferase</keyword>
<comment type="function">
    <text evidence="1">Catalyzes the reductive methylation of 2'-deoxyuridine-5'-monophosphate (dUMP) to 2'-deoxythymidine-5'-monophosphate (dTMP) while utilizing 5,10-methylenetetrahydrofolate (mTHF) as the methyl donor and reductant in the reaction, yielding dihydrofolate (DHF) as a by-product. This enzymatic reaction provides an intracellular de novo source of dTMP, an essential precursor for DNA biosynthesis.</text>
</comment>
<comment type="catalytic activity">
    <reaction evidence="1">
        <text>dUMP + (6R)-5,10-methylene-5,6,7,8-tetrahydrofolate = 7,8-dihydrofolate + dTMP</text>
        <dbReference type="Rhea" id="RHEA:12104"/>
        <dbReference type="ChEBI" id="CHEBI:15636"/>
        <dbReference type="ChEBI" id="CHEBI:57451"/>
        <dbReference type="ChEBI" id="CHEBI:63528"/>
        <dbReference type="ChEBI" id="CHEBI:246422"/>
        <dbReference type="EC" id="2.1.1.45"/>
    </reaction>
</comment>
<comment type="pathway">
    <text evidence="1">Pyrimidine metabolism; dTTP biosynthesis.</text>
</comment>
<comment type="subunit">
    <text evidence="1">Homodimer.</text>
</comment>
<comment type="subcellular location">
    <subcellularLocation>
        <location evidence="1">Cytoplasm</location>
    </subcellularLocation>
</comment>
<comment type="similarity">
    <text evidence="1">Belongs to the thymidylate synthase family. Bacterial-type ThyA subfamily.</text>
</comment>
<comment type="sequence caution" evidence="2">
    <conflict type="erroneous initiation">
        <sequence resource="EMBL-CDS" id="BAE50131"/>
    </conflict>
</comment>
<feature type="chain" id="PRO_0000321470" description="Thymidylate synthase">
    <location>
        <begin position="1"/>
        <end position="264"/>
    </location>
</feature>
<feature type="active site" description="Nucleophile" evidence="1">
    <location>
        <position position="146"/>
    </location>
</feature>
<feature type="binding site" description="in other chain" evidence="1">
    <location>
        <position position="21"/>
    </location>
    <ligand>
        <name>dUMP</name>
        <dbReference type="ChEBI" id="CHEBI:246422"/>
        <note>ligand shared between dimeric partners</note>
    </ligand>
</feature>
<feature type="binding site" evidence="1">
    <location>
        <position position="51"/>
    </location>
    <ligand>
        <name>(6R)-5,10-methylene-5,6,7,8-tetrahydrofolate</name>
        <dbReference type="ChEBI" id="CHEBI:15636"/>
    </ligand>
</feature>
<feature type="binding site" evidence="1">
    <location>
        <begin position="126"/>
        <end position="127"/>
    </location>
    <ligand>
        <name>dUMP</name>
        <dbReference type="ChEBI" id="CHEBI:246422"/>
        <note>ligand shared between dimeric partners</note>
    </ligand>
</feature>
<feature type="binding site" description="in other chain" evidence="1">
    <location>
        <begin position="166"/>
        <end position="169"/>
    </location>
    <ligand>
        <name>dUMP</name>
        <dbReference type="ChEBI" id="CHEBI:246422"/>
        <note>ligand shared between dimeric partners</note>
    </ligand>
</feature>
<feature type="binding site" evidence="1">
    <location>
        <position position="169"/>
    </location>
    <ligand>
        <name>(6R)-5,10-methylene-5,6,7,8-tetrahydrofolate</name>
        <dbReference type="ChEBI" id="CHEBI:15636"/>
    </ligand>
</feature>
<feature type="binding site" description="in other chain" evidence="1">
    <location>
        <position position="177"/>
    </location>
    <ligand>
        <name>dUMP</name>
        <dbReference type="ChEBI" id="CHEBI:246422"/>
        <note>ligand shared between dimeric partners</note>
    </ligand>
</feature>
<feature type="binding site" description="in other chain" evidence="1">
    <location>
        <begin position="207"/>
        <end position="209"/>
    </location>
    <ligand>
        <name>dUMP</name>
        <dbReference type="ChEBI" id="CHEBI:246422"/>
        <note>ligand shared between dimeric partners</note>
    </ligand>
</feature>
<feature type="binding site" evidence="1">
    <location>
        <position position="263"/>
    </location>
    <ligand>
        <name>(6R)-5,10-methylene-5,6,7,8-tetrahydrofolate</name>
        <dbReference type="ChEBI" id="CHEBI:15636"/>
    </ligand>
</feature>
<proteinExistence type="inferred from homology"/>
<dbReference type="EC" id="2.1.1.45" evidence="1"/>
<dbReference type="EMBL" id="AP007255">
    <property type="protein sequence ID" value="BAE50131.1"/>
    <property type="status" value="ALT_INIT"/>
    <property type="molecule type" value="Genomic_DNA"/>
</dbReference>
<dbReference type="RefSeq" id="WP_043743655.1">
    <property type="nucleotide sequence ID" value="NC_007626.1"/>
</dbReference>
<dbReference type="SMR" id="Q2W7P4"/>
<dbReference type="STRING" id="342108.amb1327"/>
<dbReference type="KEGG" id="mag:amb1327"/>
<dbReference type="HOGENOM" id="CLU_021669_0_0_5"/>
<dbReference type="OrthoDB" id="9774633at2"/>
<dbReference type="UniPathway" id="UPA00575"/>
<dbReference type="Proteomes" id="UP000007058">
    <property type="component" value="Chromosome"/>
</dbReference>
<dbReference type="GO" id="GO:0005829">
    <property type="term" value="C:cytosol"/>
    <property type="evidence" value="ECO:0007669"/>
    <property type="project" value="TreeGrafter"/>
</dbReference>
<dbReference type="GO" id="GO:0004799">
    <property type="term" value="F:thymidylate synthase activity"/>
    <property type="evidence" value="ECO:0007669"/>
    <property type="project" value="UniProtKB-UniRule"/>
</dbReference>
<dbReference type="GO" id="GO:0006231">
    <property type="term" value="P:dTMP biosynthetic process"/>
    <property type="evidence" value="ECO:0007669"/>
    <property type="project" value="UniProtKB-UniRule"/>
</dbReference>
<dbReference type="GO" id="GO:0006235">
    <property type="term" value="P:dTTP biosynthetic process"/>
    <property type="evidence" value="ECO:0007669"/>
    <property type="project" value="UniProtKB-UniRule"/>
</dbReference>
<dbReference type="GO" id="GO:0032259">
    <property type="term" value="P:methylation"/>
    <property type="evidence" value="ECO:0007669"/>
    <property type="project" value="UniProtKB-KW"/>
</dbReference>
<dbReference type="CDD" id="cd00351">
    <property type="entry name" value="TS_Pyrimidine_HMase"/>
    <property type="match status" value="1"/>
</dbReference>
<dbReference type="FunFam" id="3.30.572.10:FF:000001">
    <property type="entry name" value="Thymidylate synthase"/>
    <property type="match status" value="1"/>
</dbReference>
<dbReference type="Gene3D" id="3.30.572.10">
    <property type="entry name" value="Thymidylate synthase/dCMP hydroxymethylase domain"/>
    <property type="match status" value="1"/>
</dbReference>
<dbReference type="HAMAP" id="MF_00008">
    <property type="entry name" value="Thymidy_synth_bact"/>
    <property type="match status" value="1"/>
</dbReference>
<dbReference type="InterPro" id="IPR045097">
    <property type="entry name" value="Thymidate_synth/dCMP_Mease"/>
</dbReference>
<dbReference type="InterPro" id="IPR023451">
    <property type="entry name" value="Thymidate_synth/dCMP_Mease_dom"/>
</dbReference>
<dbReference type="InterPro" id="IPR036926">
    <property type="entry name" value="Thymidate_synth/dCMP_Mease_sf"/>
</dbReference>
<dbReference type="InterPro" id="IPR000398">
    <property type="entry name" value="Thymidylate_synthase"/>
</dbReference>
<dbReference type="InterPro" id="IPR020940">
    <property type="entry name" value="Thymidylate_synthase_AS"/>
</dbReference>
<dbReference type="NCBIfam" id="NF002497">
    <property type="entry name" value="PRK01827.1-3"/>
    <property type="match status" value="1"/>
</dbReference>
<dbReference type="NCBIfam" id="NF002499">
    <property type="entry name" value="PRK01827.1-5"/>
    <property type="match status" value="1"/>
</dbReference>
<dbReference type="NCBIfam" id="TIGR03284">
    <property type="entry name" value="thym_sym"/>
    <property type="match status" value="2"/>
</dbReference>
<dbReference type="PANTHER" id="PTHR11548:SF9">
    <property type="entry name" value="THYMIDYLATE SYNTHASE"/>
    <property type="match status" value="1"/>
</dbReference>
<dbReference type="PANTHER" id="PTHR11548">
    <property type="entry name" value="THYMIDYLATE SYNTHASE 1"/>
    <property type="match status" value="1"/>
</dbReference>
<dbReference type="Pfam" id="PF00303">
    <property type="entry name" value="Thymidylat_synt"/>
    <property type="match status" value="1"/>
</dbReference>
<dbReference type="PRINTS" id="PR00108">
    <property type="entry name" value="THYMDSNTHASE"/>
</dbReference>
<dbReference type="SUPFAM" id="SSF55831">
    <property type="entry name" value="Thymidylate synthase/dCMP hydroxymethylase"/>
    <property type="match status" value="1"/>
</dbReference>
<dbReference type="PROSITE" id="PS00091">
    <property type="entry name" value="THYMIDYLATE_SYNTHASE"/>
    <property type="match status" value="1"/>
</dbReference>
<accession>Q2W7P4</accession>
<protein>
    <recommendedName>
        <fullName evidence="1">Thymidylate synthase</fullName>
        <shortName evidence="1">TS</shortName>
        <shortName evidence="1">TSase</shortName>
        <ecNumber evidence="1">2.1.1.45</ecNumber>
    </recommendedName>
</protein>
<reference key="1">
    <citation type="journal article" date="2005" name="DNA Res.">
        <title>Complete genome sequence of the facultative anaerobic magnetotactic bacterium Magnetospirillum sp. strain AMB-1.</title>
        <authorList>
            <person name="Matsunaga T."/>
            <person name="Okamura Y."/>
            <person name="Fukuda Y."/>
            <person name="Wahyudi A.T."/>
            <person name="Murase Y."/>
            <person name="Takeyama H."/>
        </authorList>
    </citation>
    <scope>NUCLEOTIDE SEQUENCE [LARGE SCALE GENOMIC DNA]</scope>
    <source>
        <strain>ATCC 700264 / AMB-1</strain>
    </source>
</reference>